<name>RL6_RHOE4</name>
<comment type="function">
    <text evidence="1">This protein binds to the 23S rRNA, and is important in its secondary structure. It is located near the subunit interface in the base of the L7/L12 stalk, and near the tRNA binding site of the peptidyltransferase center.</text>
</comment>
<comment type="subunit">
    <text evidence="1">Part of the 50S ribosomal subunit.</text>
</comment>
<comment type="similarity">
    <text evidence="1">Belongs to the universal ribosomal protein uL6 family.</text>
</comment>
<sequence length="179" mass="19359">MSRIGKIPVTVPAGVDVTISGQDVTVKGPKGTLALTISEPIAIEKAEDGSLSVTRPDDERRSRALHGLSRTLVANIITGVTEGYTKKMEIHGVGYRVALKGKDLEFALGFSHPVPIEAPEGITFVVESPTRFSVSGIDKQKVGQISANIRRLRRPDPYKGKGVRYEGEQIRRKVGKTGK</sequence>
<keyword id="KW-0687">Ribonucleoprotein</keyword>
<keyword id="KW-0689">Ribosomal protein</keyword>
<keyword id="KW-0694">RNA-binding</keyword>
<keyword id="KW-0699">rRNA-binding</keyword>
<organism>
    <name type="scientific">Rhodococcus erythropolis (strain PR4 / NBRC 100887)</name>
    <dbReference type="NCBI Taxonomy" id="234621"/>
    <lineage>
        <taxon>Bacteria</taxon>
        <taxon>Bacillati</taxon>
        <taxon>Actinomycetota</taxon>
        <taxon>Actinomycetes</taxon>
        <taxon>Mycobacteriales</taxon>
        <taxon>Nocardiaceae</taxon>
        <taxon>Rhodococcus</taxon>
        <taxon>Rhodococcus erythropolis group</taxon>
    </lineage>
</organism>
<proteinExistence type="inferred from homology"/>
<gene>
    <name evidence="1" type="primary">rplF</name>
    <name type="ordered locus">RER_18680</name>
</gene>
<reference key="1">
    <citation type="submission" date="2005-03" db="EMBL/GenBank/DDBJ databases">
        <title>Comparison of the complete genome sequences of Rhodococcus erythropolis PR4 and Rhodococcus opacus B4.</title>
        <authorList>
            <person name="Takarada H."/>
            <person name="Sekine M."/>
            <person name="Hosoyama A."/>
            <person name="Yamada R."/>
            <person name="Fujisawa T."/>
            <person name="Omata S."/>
            <person name="Shimizu A."/>
            <person name="Tsukatani N."/>
            <person name="Tanikawa S."/>
            <person name="Fujita N."/>
            <person name="Harayama S."/>
        </authorList>
    </citation>
    <scope>NUCLEOTIDE SEQUENCE [LARGE SCALE GENOMIC DNA]</scope>
    <source>
        <strain>PR4 / NBRC 100887</strain>
    </source>
</reference>
<feature type="chain" id="PRO_1000214934" description="Large ribosomal subunit protein uL6">
    <location>
        <begin position="1"/>
        <end position="179"/>
    </location>
</feature>
<protein>
    <recommendedName>
        <fullName evidence="1">Large ribosomal subunit protein uL6</fullName>
    </recommendedName>
    <alternativeName>
        <fullName evidence="2">50S ribosomal protein L6</fullName>
    </alternativeName>
</protein>
<evidence type="ECO:0000255" key="1">
    <source>
        <dbReference type="HAMAP-Rule" id="MF_01365"/>
    </source>
</evidence>
<evidence type="ECO:0000305" key="2"/>
<accession>C0ZW41</accession>
<dbReference type="EMBL" id="AP008957">
    <property type="protein sequence ID" value="BAH32576.1"/>
    <property type="molecule type" value="Genomic_DNA"/>
</dbReference>
<dbReference type="RefSeq" id="WP_003940970.1">
    <property type="nucleotide sequence ID" value="NC_012490.1"/>
</dbReference>
<dbReference type="SMR" id="C0ZW41"/>
<dbReference type="GeneID" id="93803289"/>
<dbReference type="KEGG" id="rer:RER_18680"/>
<dbReference type="eggNOG" id="COG0097">
    <property type="taxonomic scope" value="Bacteria"/>
</dbReference>
<dbReference type="HOGENOM" id="CLU_065464_1_2_11"/>
<dbReference type="Proteomes" id="UP000002204">
    <property type="component" value="Chromosome"/>
</dbReference>
<dbReference type="GO" id="GO:0022625">
    <property type="term" value="C:cytosolic large ribosomal subunit"/>
    <property type="evidence" value="ECO:0007669"/>
    <property type="project" value="TreeGrafter"/>
</dbReference>
<dbReference type="GO" id="GO:0019843">
    <property type="term" value="F:rRNA binding"/>
    <property type="evidence" value="ECO:0007669"/>
    <property type="project" value="UniProtKB-UniRule"/>
</dbReference>
<dbReference type="GO" id="GO:0003735">
    <property type="term" value="F:structural constituent of ribosome"/>
    <property type="evidence" value="ECO:0007669"/>
    <property type="project" value="InterPro"/>
</dbReference>
<dbReference type="GO" id="GO:0002181">
    <property type="term" value="P:cytoplasmic translation"/>
    <property type="evidence" value="ECO:0007669"/>
    <property type="project" value="TreeGrafter"/>
</dbReference>
<dbReference type="FunFam" id="3.90.930.12:FF:000001">
    <property type="entry name" value="50S ribosomal protein L6"/>
    <property type="match status" value="1"/>
</dbReference>
<dbReference type="FunFam" id="3.90.930.12:FF:000002">
    <property type="entry name" value="50S ribosomal protein L6"/>
    <property type="match status" value="1"/>
</dbReference>
<dbReference type="Gene3D" id="3.90.930.12">
    <property type="entry name" value="Ribosomal protein L6, alpha-beta domain"/>
    <property type="match status" value="2"/>
</dbReference>
<dbReference type="HAMAP" id="MF_01365_B">
    <property type="entry name" value="Ribosomal_uL6_B"/>
    <property type="match status" value="1"/>
</dbReference>
<dbReference type="InterPro" id="IPR000702">
    <property type="entry name" value="Ribosomal_uL6-like"/>
</dbReference>
<dbReference type="InterPro" id="IPR036789">
    <property type="entry name" value="Ribosomal_uL6-like_a/b-dom_sf"/>
</dbReference>
<dbReference type="InterPro" id="IPR020040">
    <property type="entry name" value="Ribosomal_uL6_a/b-dom"/>
</dbReference>
<dbReference type="InterPro" id="IPR019906">
    <property type="entry name" value="Ribosomal_uL6_bac-type"/>
</dbReference>
<dbReference type="InterPro" id="IPR002358">
    <property type="entry name" value="Ribosomal_uL6_CS"/>
</dbReference>
<dbReference type="NCBIfam" id="TIGR03654">
    <property type="entry name" value="L6_bact"/>
    <property type="match status" value="1"/>
</dbReference>
<dbReference type="PANTHER" id="PTHR11655">
    <property type="entry name" value="60S/50S RIBOSOMAL PROTEIN L6/L9"/>
    <property type="match status" value="1"/>
</dbReference>
<dbReference type="PANTHER" id="PTHR11655:SF14">
    <property type="entry name" value="LARGE RIBOSOMAL SUBUNIT PROTEIN UL6M"/>
    <property type="match status" value="1"/>
</dbReference>
<dbReference type="Pfam" id="PF00347">
    <property type="entry name" value="Ribosomal_L6"/>
    <property type="match status" value="2"/>
</dbReference>
<dbReference type="PIRSF" id="PIRSF002162">
    <property type="entry name" value="Ribosomal_L6"/>
    <property type="match status" value="1"/>
</dbReference>
<dbReference type="PRINTS" id="PR00059">
    <property type="entry name" value="RIBOSOMALL6"/>
</dbReference>
<dbReference type="SUPFAM" id="SSF56053">
    <property type="entry name" value="Ribosomal protein L6"/>
    <property type="match status" value="2"/>
</dbReference>
<dbReference type="PROSITE" id="PS00525">
    <property type="entry name" value="RIBOSOMAL_L6_1"/>
    <property type="match status" value="1"/>
</dbReference>